<dbReference type="EC" id="2.1.1.22" evidence="1"/>
<dbReference type="EMBL" id="AE014298">
    <property type="protein sequence ID" value="AAF45697.1"/>
    <property type="molecule type" value="Genomic_DNA"/>
</dbReference>
<dbReference type="EMBL" id="AE014298">
    <property type="protein sequence ID" value="AAF45698.1"/>
    <property type="molecule type" value="Genomic_DNA"/>
</dbReference>
<dbReference type="EMBL" id="AE014298">
    <property type="protein sequence ID" value="AAG22387.1"/>
    <property type="molecule type" value="Genomic_DNA"/>
</dbReference>
<dbReference type="EMBL" id="AE014298">
    <property type="protein sequence ID" value="AGB95000.1"/>
    <property type="molecule type" value="Genomic_DNA"/>
</dbReference>
<dbReference type="EMBL" id="AE014298">
    <property type="protein sequence ID" value="AGB95001.1"/>
    <property type="molecule type" value="Genomic_DNA"/>
</dbReference>
<dbReference type="EMBL" id="AL009191">
    <property type="protein sequence ID" value="CAA15684.1"/>
    <property type="molecule type" value="Genomic_DNA"/>
</dbReference>
<dbReference type="EMBL" id="AY051951">
    <property type="protein sequence ID" value="AAK93375.1"/>
    <property type="molecule type" value="mRNA"/>
</dbReference>
<dbReference type="EMBL" id="BT125784">
    <property type="protein sequence ID" value="ADQ89798.1"/>
    <property type="molecule type" value="mRNA"/>
</dbReference>
<dbReference type="RefSeq" id="NP_001259154.1">
    <molecule id="Q9I7X6-3"/>
    <property type="nucleotide sequence ID" value="NM_001272225.1"/>
</dbReference>
<dbReference type="RefSeq" id="NP_001259155.1">
    <molecule id="Q9I7X6-3"/>
    <property type="nucleotide sequence ID" value="NM_001272226.1"/>
</dbReference>
<dbReference type="RefSeq" id="NP_569963.1">
    <molecule id="Q9I7X6-1"/>
    <property type="nucleotide sequence ID" value="NM_130607.3"/>
</dbReference>
<dbReference type="RefSeq" id="NP_726779.1">
    <molecule id="Q9I7X6-2"/>
    <property type="nucleotide sequence ID" value="NM_166916.2"/>
</dbReference>
<dbReference type="RefSeq" id="NP_726780.1">
    <molecule id="Q9I7X6-3"/>
    <property type="nucleotide sequence ID" value="NM_166917.2"/>
</dbReference>
<dbReference type="SMR" id="Q9I7X6"/>
<dbReference type="BioGRID" id="57704">
    <property type="interactions" value="18"/>
</dbReference>
<dbReference type="FunCoup" id="Q9I7X6">
    <property type="interactions" value="1388"/>
</dbReference>
<dbReference type="IntAct" id="Q9I7X6">
    <property type="interactions" value="28"/>
</dbReference>
<dbReference type="STRING" id="7227.FBpp0070305"/>
<dbReference type="iPTMnet" id="Q9I7X6"/>
<dbReference type="PaxDb" id="7227-FBpp0070305"/>
<dbReference type="DNASU" id="31158"/>
<dbReference type="EnsemblMetazoa" id="FBtr0070318">
    <molecule id="Q9I7X6-2"/>
    <property type="protein sequence ID" value="FBpp0070305"/>
    <property type="gene ID" value="FBgn0023522"/>
</dbReference>
<dbReference type="EnsemblMetazoa" id="FBtr0070319">
    <molecule id="Q9I7X6-1"/>
    <property type="protein sequence ID" value="FBpp0070306"/>
    <property type="gene ID" value="FBgn0023522"/>
</dbReference>
<dbReference type="EnsemblMetazoa" id="FBtr0070320">
    <molecule id="Q9I7X6-3"/>
    <property type="protein sequence ID" value="FBpp0070307"/>
    <property type="gene ID" value="FBgn0023522"/>
</dbReference>
<dbReference type="EnsemblMetazoa" id="FBtr0332587">
    <molecule id="Q9I7X6-3"/>
    <property type="protein sequence ID" value="FBpp0304838"/>
    <property type="gene ID" value="FBgn0023522"/>
</dbReference>
<dbReference type="EnsemblMetazoa" id="FBtr0332588">
    <molecule id="Q9I7X6-3"/>
    <property type="protein sequence ID" value="FBpp0304839"/>
    <property type="gene ID" value="FBgn0023522"/>
</dbReference>
<dbReference type="GeneID" id="31158"/>
<dbReference type="KEGG" id="dme:Dmel_CG11596"/>
<dbReference type="UCSC" id="CG11596-RA">
    <molecule id="Q9I7X6-2"/>
    <property type="organism name" value="d. melanogaster"/>
</dbReference>
<dbReference type="UCSC" id="CG11596-RB">
    <property type="organism name" value="d. melanogaster"/>
</dbReference>
<dbReference type="UCSC" id="CG11596-RC">
    <property type="organism name" value="d. melanogaster"/>
</dbReference>
<dbReference type="AGR" id="FB:FBgn0023522"/>
<dbReference type="FlyBase" id="FBgn0023522">
    <property type="gene designation" value="unmet"/>
</dbReference>
<dbReference type="VEuPathDB" id="VectorBase:FBgn0023522"/>
<dbReference type="eggNOG" id="KOG2798">
    <property type="taxonomic scope" value="Eukaryota"/>
</dbReference>
<dbReference type="GeneTree" id="ENSGT00390000005323"/>
<dbReference type="HOGENOM" id="CLU_030612_1_2_1"/>
<dbReference type="InParanoid" id="Q9I7X6"/>
<dbReference type="OMA" id="GSMSMCA"/>
<dbReference type="OrthoDB" id="978at2759"/>
<dbReference type="PhylomeDB" id="Q9I7X6"/>
<dbReference type="Reactome" id="R-DME-70921">
    <property type="pathway name" value="Histidine catabolism"/>
</dbReference>
<dbReference type="BioGRID-ORCS" id="31158">
    <property type="hits" value="0 hits in 1 CRISPR screen"/>
</dbReference>
<dbReference type="GenomeRNAi" id="31158"/>
<dbReference type="PRO" id="PR:Q9I7X6"/>
<dbReference type="Proteomes" id="UP000000803">
    <property type="component" value="Chromosome X"/>
</dbReference>
<dbReference type="Bgee" id="FBgn0023522">
    <property type="expression patterns" value="Expressed in egg cell and 82 other cell types or tissues"/>
</dbReference>
<dbReference type="ExpressionAtlas" id="Q9I7X6">
    <property type="expression patterns" value="baseline and differential"/>
</dbReference>
<dbReference type="GO" id="GO:0005829">
    <property type="term" value="C:cytosol"/>
    <property type="evidence" value="ECO:0000318"/>
    <property type="project" value="GO_Central"/>
</dbReference>
<dbReference type="GO" id="GO:0005634">
    <property type="term" value="C:nucleus"/>
    <property type="evidence" value="ECO:0000318"/>
    <property type="project" value="GO_Central"/>
</dbReference>
<dbReference type="GO" id="GO:0140785">
    <property type="term" value="F:amino acid sensor activity"/>
    <property type="evidence" value="ECO:0000314"/>
    <property type="project" value="FlyBase"/>
</dbReference>
<dbReference type="GO" id="GO:0030735">
    <property type="term" value="F:carnosine N-methyltransferase activity"/>
    <property type="evidence" value="ECO:0000250"/>
    <property type="project" value="UniProtKB"/>
</dbReference>
<dbReference type="GO" id="GO:0044877">
    <property type="term" value="F:protein-containing complex binding"/>
    <property type="evidence" value="ECO:0000314"/>
    <property type="project" value="FlyBase"/>
</dbReference>
<dbReference type="GO" id="GO:0035498">
    <property type="term" value="P:carnosine metabolic process"/>
    <property type="evidence" value="ECO:0000250"/>
    <property type="project" value="UniProtKB"/>
</dbReference>
<dbReference type="GO" id="GO:0034198">
    <property type="term" value="P:cellular response to amino acid starvation"/>
    <property type="evidence" value="ECO:0000315"/>
    <property type="project" value="FlyBase"/>
</dbReference>
<dbReference type="GO" id="GO:0061431">
    <property type="term" value="P:cellular response to methionine"/>
    <property type="evidence" value="ECO:0000314"/>
    <property type="project" value="FlyBase"/>
</dbReference>
<dbReference type="GO" id="GO:0032259">
    <property type="term" value="P:methylation"/>
    <property type="evidence" value="ECO:0007669"/>
    <property type="project" value="UniProtKB-KW"/>
</dbReference>
<dbReference type="GO" id="GO:1904262">
    <property type="term" value="P:negative regulation of TORC1 signaling"/>
    <property type="evidence" value="ECO:0000315"/>
    <property type="project" value="FlyBase"/>
</dbReference>
<dbReference type="Gene3D" id="3.40.50.150">
    <property type="entry name" value="Vaccinia Virus protein VP39"/>
    <property type="match status" value="1"/>
</dbReference>
<dbReference type="InterPro" id="IPR012901">
    <property type="entry name" value="CARME"/>
</dbReference>
<dbReference type="InterPro" id="IPR029063">
    <property type="entry name" value="SAM-dependent_MTases_sf"/>
</dbReference>
<dbReference type="PANTHER" id="PTHR12303">
    <property type="entry name" value="CARNOSINE N-METHYLTRANSFERASE"/>
    <property type="match status" value="1"/>
</dbReference>
<dbReference type="PANTHER" id="PTHR12303:SF6">
    <property type="entry name" value="CARNOSINE N-METHYLTRANSFERASE"/>
    <property type="match status" value="1"/>
</dbReference>
<dbReference type="Pfam" id="PF07942">
    <property type="entry name" value="CARME"/>
    <property type="match status" value="1"/>
</dbReference>
<dbReference type="SMART" id="SM01296">
    <property type="entry name" value="N2227"/>
    <property type="match status" value="1"/>
</dbReference>
<dbReference type="SUPFAM" id="SSF53335">
    <property type="entry name" value="S-adenosyl-L-methionine-dependent methyltransferases"/>
    <property type="match status" value="1"/>
</dbReference>
<evidence type="ECO:0000250" key="1">
    <source>
        <dbReference type="UniProtKB" id="Q8N4J0"/>
    </source>
</evidence>
<evidence type="ECO:0000256" key="2">
    <source>
        <dbReference type="SAM" id="MobiDB-lite"/>
    </source>
</evidence>
<evidence type="ECO:0000269" key="3">
    <source>
    </source>
</evidence>
<evidence type="ECO:0000269" key="4">
    <source>
    </source>
</evidence>
<evidence type="ECO:0000269" key="5">
    <source>
    </source>
</evidence>
<evidence type="ECO:0000303" key="6">
    <source>
    </source>
</evidence>
<evidence type="ECO:0000305" key="7"/>
<evidence type="ECO:0000305" key="8">
    <source>
    </source>
</evidence>
<evidence type="ECO:0000312" key="9">
    <source>
        <dbReference type="EMBL" id="ADQ89798.1"/>
    </source>
</evidence>
<evidence type="ECO:0000312" key="10">
    <source>
        <dbReference type="FlyBase" id="FBgn0023522"/>
    </source>
</evidence>
<evidence type="ECO:0000312" key="11">
    <source>
        <dbReference type="Proteomes" id="UP000000803"/>
    </source>
</evidence>
<keyword id="KW-0024">Alternative initiation</keyword>
<keyword id="KW-0025">Alternative splicing</keyword>
<keyword id="KW-0489">Methyltransferase</keyword>
<keyword id="KW-0597">Phosphoprotein</keyword>
<keyword id="KW-1185">Reference proteome</keyword>
<keyword id="KW-0949">S-adenosyl-L-methionine</keyword>
<keyword id="KW-0808">Transferase</keyword>
<feature type="chain" id="PRO_0000372646" description="Carnosine N-methyltransferase unmet">
    <location>
        <begin position="1"/>
        <end position="456"/>
    </location>
</feature>
<feature type="region of interest" description="Disordered" evidence="2">
    <location>
        <begin position="402"/>
        <end position="456"/>
    </location>
</feature>
<feature type="compositionally biased region" description="Basic and acidic residues" evidence="2">
    <location>
        <begin position="402"/>
        <end position="418"/>
    </location>
</feature>
<feature type="compositionally biased region" description="Basic and acidic residues" evidence="2">
    <location>
        <begin position="427"/>
        <end position="438"/>
    </location>
</feature>
<feature type="binding site" evidence="1">
    <location>
        <position position="154"/>
    </location>
    <ligand>
        <name>S-adenosyl-L-methionine</name>
        <dbReference type="ChEBI" id="CHEBI:59789"/>
    </ligand>
</feature>
<feature type="binding site" evidence="1">
    <location>
        <position position="195"/>
    </location>
    <ligand>
        <name>S-adenosyl-L-methionine</name>
        <dbReference type="ChEBI" id="CHEBI:59789"/>
    </ligand>
</feature>
<feature type="binding site" evidence="1">
    <location>
        <position position="216"/>
    </location>
    <ligand>
        <name>S-adenosyl-L-methionine</name>
        <dbReference type="ChEBI" id="CHEBI:59789"/>
    </ligand>
</feature>
<feature type="binding site" evidence="1">
    <location>
        <position position="282"/>
    </location>
    <ligand>
        <name>S-adenosyl-L-methionine</name>
        <dbReference type="ChEBI" id="CHEBI:59789"/>
    </ligand>
</feature>
<feature type="binding site" evidence="1">
    <location>
        <position position="283"/>
    </location>
    <ligand>
        <name>S-adenosyl-L-methionine</name>
        <dbReference type="ChEBI" id="CHEBI:59789"/>
    </ligand>
</feature>
<feature type="binding site" evidence="1">
    <location>
        <position position="299"/>
    </location>
    <ligand>
        <name>S-adenosyl-L-methionine</name>
        <dbReference type="ChEBI" id="CHEBI:59789"/>
    </ligand>
</feature>
<feature type="binding site" evidence="1">
    <location>
        <position position="303"/>
    </location>
    <ligand>
        <name>carnosine</name>
        <dbReference type="ChEBI" id="CHEBI:57485"/>
    </ligand>
</feature>
<feature type="binding site" evidence="1">
    <location>
        <position position="334"/>
    </location>
    <ligand>
        <name>carnosine</name>
        <dbReference type="ChEBI" id="CHEBI:57485"/>
    </ligand>
</feature>
<feature type="binding site" evidence="1">
    <location>
        <position position="385"/>
    </location>
    <ligand>
        <name>carnosine</name>
        <dbReference type="ChEBI" id="CHEBI:57485"/>
    </ligand>
</feature>
<feature type="modified residue" description="Phosphoserine" evidence="4">
    <location>
        <position position="408"/>
    </location>
</feature>
<feature type="modified residue" description="Phosphoserine" evidence="3 4">
    <location>
        <position position="420"/>
    </location>
</feature>
<feature type="splice variant" id="VSP_062505" description="In isoform B.">
    <location>
        <begin position="1"/>
        <end position="55"/>
    </location>
</feature>
<feature type="splice variant" id="VSP_062506" description="In isoform A.">
    <location>
        <begin position="128"/>
        <end position="144"/>
    </location>
</feature>
<feature type="mutagenesis site" description="Disrupts association with the GATOR2 complex but not S-adenosyl-L-methionine binding. Constitutively inhibits mTORC1signaling." evidence="5">
    <original>E</original>
    <variation>A</variation>
    <location>
        <position position="30"/>
    </location>
</feature>
<feature type="mutagenesis site" description="Abolishes S-adenosyl-L-methionine binding but not association with the GATOR2 complex. Unable to regulate mTORC1 signaling." evidence="5">
    <original>G</original>
    <variation>D</variation>
    <location>
        <position position="195"/>
    </location>
</feature>
<proteinExistence type="evidence at protein level"/>
<accession>Q9I7X6</accession>
<accession>E4NKI7</accession>
<accession>M9PGG7</accession>
<accession>O46078</accession>
<accession>Q7KW04</accession>
<accession>Q9W540</accession>
<organism evidence="11">
    <name type="scientific">Drosophila melanogaster</name>
    <name type="common">Fruit fly</name>
    <dbReference type="NCBI Taxonomy" id="7227"/>
    <lineage>
        <taxon>Eukaryota</taxon>
        <taxon>Metazoa</taxon>
        <taxon>Ecdysozoa</taxon>
        <taxon>Arthropoda</taxon>
        <taxon>Hexapoda</taxon>
        <taxon>Insecta</taxon>
        <taxon>Pterygota</taxon>
        <taxon>Neoptera</taxon>
        <taxon>Endopterygota</taxon>
        <taxon>Diptera</taxon>
        <taxon>Brachycera</taxon>
        <taxon>Muscomorpha</taxon>
        <taxon>Ephydroidea</taxon>
        <taxon>Drosophilidae</taxon>
        <taxon>Drosophila</taxon>
        <taxon>Sophophora</taxon>
    </lineage>
</organism>
<reference key="1">
    <citation type="journal article" date="2000" name="Science">
        <title>The genome sequence of Drosophila melanogaster.</title>
        <authorList>
            <person name="Adams M.D."/>
            <person name="Celniker S.E."/>
            <person name="Holt R.A."/>
            <person name="Evans C.A."/>
            <person name="Gocayne J.D."/>
            <person name="Amanatides P.G."/>
            <person name="Scherer S.E."/>
            <person name="Li P.W."/>
            <person name="Hoskins R.A."/>
            <person name="Galle R.F."/>
            <person name="George R.A."/>
            <person name="Lewis S.E."/>
            <person name="Richards S."/>
            <person name="Ashburner M."/>
            <person name="Henderson S.N."/>
            <person name="Sutton G.G."/>
            <person name="Wortman J.R."/>
            <person name="Yandell M.D."/>
            <person name="Zhang Q."/>
            <person name="Chen L.X."/>
            <person name="Brandon R.C."/>
            <person name="Rogers Y.-H.C."/>
            <person name="Blazej R.G."/>
            <person name="Champe M."/>
            <person name="Pfeiffer B.D."/>
            <person name="Wan K.H."/>
            <person name="Doyle C."/>
            <person name="Baxter E.G."/>
            <person name="Helt G."/>
            <person name="Nelson C.R."/>
            <person name="Miklos G.L.G."/>
            <person name="Abril J.F."/>
            <person name="Agbayani A."/>
            <person name="An H.-J."/>
            <person name="Andrews-Pfannkoch C."/>
            <person name="Baldwin D."/>
            <person name="Ballew R.M."/>
            <person name="Basu A."/>
            <person name="Baxendale J."/>
            <person name="Bayraktaroglu L."/>
            <person name="Beasley E.M."/>
            <person name="Beeson K.Y."/>
            <person name="Benos P.V."/>
            <person name="Berman B.P."/>
            <person name="Bhandari D."/>
            <person name="Bolshakov S."/>
            <person name="Borkova D."/>
            <person name="Botchan M.R."/>
            <person name="Bouck J."/>
            <person name="Brokstein P."/>
            <person name="Brottier P."/>
            <person name="Burtis K.C."/>
            <person name="Busam D.A."/>
            <person name="Butler H."/>
            <person name="Cadieu E."/>
            <person name="Center A."/>
            <person name="Chandra I."/>
            <person name="Cherry J.M."/>
            <person name="Cawley S."/>
            <person name="Dahlke C."/>
            <person name="Davenport L.B."/>
            <person name="Davies P."/>
            <person name="de Pablos B."/>
            <person name="Delcher A."/>
            <person name="Deng Z."/>
            <person name="Mays A.D."/>
            <person name="Dew I."/>
            <person name="Dietz S.M."/>
            <person name="Dodson K."/>
            <person name="Doup L.E."/>
            <person name="Downes M."/>
            <person name="Dugan-Rocha S."/>
            <person name="Dunkov B.C."/>
            <person name="Dunn P."/>
            <person name="Durbin K.J."/>
            <person name="Evangelista C.C."/>
            <person name="Ferraz C."/>
            <person name="Ferriera S."/>
            <person name="Fleischmann W."/>
            <person name="Fosler C."/>
            <person name="Gabrielian A.E."/>
            <person name="Garg N.S."/>
            <person name="Gelbart W.M."/>
            <person name="Glasser K."/>
            <person name="Glodek A."/>
            <person name="Gong F."/>
            <person name="Gorrell J.H."/>
            <person name="Gu Z."/>
            <person name="Guan P."/>
            <person name="Harris M."/>
            <person name="Harris N.L."/>
            <person name="Harvey D.A."/>
            <person name="Heiman T.J."/>
            <person name="Hernandez J.R."/>
            <person name="Houck J."/>
            <person name="Hostin D."/>
            <person name="Houston K.A."/>
            <person name="Howland T.J."/>
            <person name="Wei M.-H."/>
            <person name="Ibegwam C."/>
            <person name="Jalali M."/>
            <person name="Kalush F."/>
            <person name="Karpen G.H."/>
            <person name="Ke Z."/>
            <person name="Kennison J.A."/>
            <person name="Ketchum K.A."/>
            <person name="Kimmel B.E."/>
            <person name="Kodira C.D."/>
            <person name="Kraft C.L."/>
            <person name="Kravitz S."/>
            <person name="Kulp D."/>
            <person name="Lai Z."/>
            <person name="Lasko P."/>
            <person name="Lei Y."/>
            <person name="Levitsky A.A."/>
            <person name="Li J.H."/>
            <person name="Li Z."/>
            <person name="Liang Y."/>
            <person name="Lin X."/>
            <person name="Liu X."/>
            <person name="Mattei B."/>
            <person name="McIntosh T.C."/>
            <person name="McLeod M.P."/>
            <person name="McPherson D."/>
            <person name="Merkulov G."/>
            <person name="Milshina N.V."/>
            <person name="Mobarry C."/>
            <person name="Morris J."/>
            <person name="Moshrefi A."/>
            <person name="Mount S.M."/>
            <person name="Moy M."/>
            <person name="Murphy B."/>
            <person name="Murphy L."/>
            <person name="Muzny D.M."/>
            <person name="Nelson D.L."/>
            <person name="Nelson D.R."/>
            <person name="Nelson K.A."/>
            <person name="Nixon K."/>
            <person name="Nusskern D.R."/>
            <person name="Pacleb J.M."/>
            <person name="Palazzolo M."/>
            <person name="Pittman G.S."/>
            <person name="Pan S."/>
            <person name="Pollard J."/>
            <person name="Puri V."/>
            <person name="Reese M.G."/>
            <person name="Reinert K."/>
            <person name="Remington K."/>
            <person name="Saunders R.D.C."/>
            <person name="Scheeler F."/>
            <person name="Shen H."/>
            <person name="Shue B.C."/>
            <person name="Siden-Kiamos I."/>
            <person name="Simpson M."/>
            <person name="Skupski M.P."/>
            <person name="Smith T.J."/>
            <person name="Spier E."/>
            <person name="Spradling A.C."/>
            <person name="Stapleton M."/>
            <person name="Strong R."/>
            <person name="Sun E."/>
            <person name="Svirskas R."/>
            <person name="Tector C."/>
            <person name="Turner R."/>
            <person name="Venter E."/>
            <person name="Wang A.H."/>
            <person name="Wang X."/>
            <person name="Wang Z.-Y."/>
            <person name="Wassarman D.A."/>
            <person name="Weinstock G.M."/>
            <person name="Weissenbach J."/>
            <person name="Williams S.M."/>
            <person name="Woodage T."/>
            <person name="Worley K.C."/>
            <person name="Wu D."/>
            <person name="Yang S."/>
            <person name="Yao Q.A."/>
            <person name="Ye J."/>
            <person name="Yeh R.-F."/>
            <person name="Zaveri J.S."/>
            <person name="Zhan M."/>
            <person name="Zhang G."/>
            <person name="Zhao Q."/>
            <person name="Zheng L."/>
            <person name="Zheng X.H."/>
            <person name="Zhong F.N."/>
            <person name="Zhong W."/>
            <person name="Zhou X."/>
            <person name="Zhu S.C."/>
            <person name="Zhu X."/>
            <person name="Smith H.O."/>
            <person name="Gibbs R.A."/>
            <person name="Myers E.W."/>
            <person name="Rubin G.M."/>
            <person name="Venter J.C."/>
        </authorList>
    </citation>
    <scope>NUCLEOTIDE SEQUENCE [LARGE SCALE GENOMIC DNA]</scope>
    <source>
        <strain>Berkeley</strain>
    </source>
</reference>
<reference key="2">
    <citation type="journal article" date="2002" name="Genome Biol.">
        <title>Annotation of the Drosophila melanogaster euchromatic genome: a systematic review.</title>
        <authorList>
            <person name="Misra S."/>
            <person name="Crosby M.A."/>
            <person name="Mungall C.J."/>
            <person name="Matthews B.B."/>
            <person name="Campbell K.S."/>
            <person name="Hradecky P."/>
            <person name="Huang Y."/>
            <person name="Kaminker J.S."/>
            <person name="Millburn G.H."/>
            <person name="Prochnik S.E."/>
            <person name="Smith C.D."/>
            <person name="Tupy J.L."/>
            <person name="Whitfield E.J."/>
            <person name="Bayraktaroglu L."/>
            <person name="Berman B.P."/>
            <person name="Bettencourt B.R."/>
            <person name="Celniker S.E."/>
            <person name="de Grey A.D.N.J."/>
            <person name="Drysdale R.A."/>
            <person name="Harris N.L."/>
            <person name="Richter J."/>
            <person name="Russo S."/>
            <person name="Schroeder A.J."/>
            <person name="Shu S.Q."/>
            <person name="Stapleton M."/>
            <person name="Yamada C."/>
            <person name="Ashburner M."/>
            <person name="Gelbart W.M."/>
            <person name="Rubin G.M."/>
            <person name="Lewis S.E."/>
        </authorList>
    </citation>
    <scope>GENOME REANNOTATION</scope>
    <scope>ALTERNATIVE SPLICING</scope>
    <source>
        <strain>Berkeley</strain>
    </source>
</reference>
<reference key="3">
    <citation type="journal article" date="2000" name="Science">
        <title>From sequence to chromosome: the tip of the X chromosome of D. melanogaster.</title>
        <authorList>
            <person name="Benos P.V."/>
            <person name="Gatt M.K."/>
            <person name="Ashburner M."/>
            <person name="Murphy L."/>
            <person name="Harris D."/>
            <person name="Barrell B.G."/>
            <person name="Ferraz C."/>
            <person name="Vidal S."/>
            <person name="Brun C."/>
            <person name="Demailles J."/>
            <person name="Cadieu E."/>
            <person name="Dreano S."/>
            <person name="Gloux S."/>
            <person name="Lelaure V."/>
            <person name="Mottier S."/>
            <person name="Galibert F."/>
            <person name="Borkova D."/>
            <person name="Minana B."/>
            <person name="Kafatos F.C."/>
            <person name="Louis C."/>
            <person name="Siden-Kiamos I."/>
            <person name="Bolshakov S."/>
            <person name="Papagiannakis G."/>
            <person name="Spanos L."/>
            <person name="Cox S."/>
            <person name="Madueno E."/>
            <person name="de Pablos B."/>
            <person name="Modolell J."/>
            <person name="Peter A."/>
            <person name="Schoettler P."/>
            <person name="Werner M."/>
            <person name="Mourkioti F."/>
            <person name="Beinert N."/>
            <person name="Dowe G."/>
            <person name="Schaefer U."/>
            <person name="Jaeckle H."/>
            <person name="Bucheton A."/>
            <person name="Callister D.M."/>
            <person name="Campbell L.A."/>
            <person name="Darlamitsou A."/>
            <person name="Henderson N.S."/>
            <person name="McMillan P.J."/>
            <person name="Salles C."/>
            <person name="Tait E.A."/>
            <person name="Valenti P."/>
            <person name="Saunders R.D.C."/>
            <person name="Glover D.M."/>
        </authorList>
    </citation>
    <scope>NUCLEOTIDE SEQUENCE [LARGE SCALE GENOMIC DNA]</scope>
    <source>
        <strain>Oregon-R</strain>
    </source>
</reference>
<reference key="4">
    <citation type="journal article" date="2002" name="Genome Biol.">
        <title>A Drosophila full-length cDNA resource.</title>
        <authorList>
            <person name="Stapleton M."/>
            <person name="Carlson J.W."/>
            <person name="Brokstein P."/>
            <person name="Yu C."/>
            <person name="Champe M."/>
            <person name="George R.A."/>
            <person name="Guarin H."/>
            <person name="Kronmiller B."/>
            <person name="Pacleb J.M."/>
            <person name="Park S."/>
            <person name="Wan K.H."/>
            <person name="Rubin G.M."/>
            <person name="Celniker S.E."/>
        </authorList>
    </citation>
    <scope>NUCLEOTIDE SEQUENCE [LARGE SCALE MRNA] (ISOFORM A)</scope>
    <source>
        <strain>Berkeley</strain>
        <tissue>Embryo</tissue>
    </source>
</reference>
<reference evidence="9" key="5">
    <citation type="submission" date="2010-11" db="EMBL/GenBank/DDBJ databases">
        <authorList>
            <person name="Carlson J."/>
            <person name="Booth B."/>
            <person name="Frise E."/>
            <person name="Park S."/>
            <person name="Wan K."/>
            <person name="Yu C."/>
            <person name="Celniker S."/>
        </authorList>
    </citation>
    <scope>NUCLEOTIDE SEQUENCE [LARGE SCALE MRNA] (ISOFORM C)</scope>
    <source>
        <strain evidence="9">Berkeley</strain>
    </source>
</reference>
<reference key="6">
    <citation type="journal article" date="2007" name="Mol. Biosyst.">
        <title>An integrated chemical, mass spectrometric and computational strategy for (quantitative) phosphoproteomics: application to Drosophila melanogaster Kc167 cells.</title>
        <authorList>
            <person name="Bodenmiller B."/>
            <person name="Mueller L.N."/>
            <person name="Pedrioli P.G.A."/>
            <person name="Pflieger D."/>
            <person name="Juenger M.A."/>
            <person name="Eng J.K."/>
            <person name="Aebersold R."/>
            <person name="Tao W.A."/>
        </authorList>
    </citation>
    <scope>PHOSPHORYLATION [LARGE SCALE ANALYSIS] AT SER-420</scope>
    <scope>IDENTIFICATION BY MASS SPECTROMETRY</scope>
</reference>
<reference key="7">
    <citation type="journal article" date="2008" name="J. Proteome Res.">
        <title>Phosphoproteome analysis of Drosophila melanogaster embryos.</title>
        <authorList>
            <person name="Zhai B."/>
            <person name="Villen J."/>
            <person name="Beausoleil S.A."/>
            <person name="Mintseris J."/>
            <person name="Gygi S.P."/>
        </authorList>
    </citation>
    <scope>PHOSPHORYLATION [LARGE SCALE ANALYSIS] AT SER-408 AND SER-420</scope>
    <scope>IDENTIFICATION BY MASS SPECTROMETRY</scope>
    <source>
        <tissue>Embryo</tissue>
    </source>
</reference>
<reference key="8">
    <citation type="journal article" date="2024" name="Nat. Commun.">
        <title>An evolutionary mechanism to assimilate new nutrient sensors into the mTORC1 pathway.</title>
        <authorList>
            <person name="Liu G.Y."/>
            <person name="Jouandin P."/>
            <person name="Bahng R.E."/>
            <person name="Perrimon N."/>
            <person name="Sabatini D.M."/>
        </authorList>
    </citation>
    <scope>FUNCTION</scope>
    <scope>INTERACTION WITH GATOR1 AND GATOR2</scope>
    <scope>DISRUPTION PHENOTYPE</scope>
    <scope>MUTAGENESIS OF GLU-30 AND GLY-195</scope>
</reference>
<sequence length="456" mass="52441">MSSMDCATFPMHPKMDEQLARTFVINEEEEEKHIQKVQNAFLYYGPYACQRLKRSMDYLNSLSGEDQIMLAKYRGHLECVRTCIDRNQAVIREILRGRVLYPTDEATGDPSEFDEPPPNVRHGDMDQIDIPFDEADVEPLKILKAQSTLKLIARDWSTEGALEREQSYKPIIDSIVAYFKHSDFELKDIKILVPGAGLGRLTYELACLGYSCEGNEFSYFMLIASNFVLNLCDNENKYVLYPWVHQYVNNLRREDQVAPVRFPDVCPLKNPPKGHFEIAAGDFLEVYKTPNAYNCVATCFFIDCANNVIDFIRTIYKILVPGGIWVNLGPLLYHFSDVSGQNSIEPAFEDLCIIMESVGFVIEKSRTGIRTKYAQNPSSMKQSEYQSLFWVCRKPDLFEEQRGKRKASREPHDLIVREDSEEEGEQQPERNETEEKQQLKPLATANCETEIKEQPS</sequence>
<comment type="function">
    <text evidence="1 5 8">S-adenosyl-L-methionine-binding protein that acts as a sensor to signal methionine availability to the mTORC1 signaling pathway (PubMed:38514639). Associates with the GATOR2 complex in the absence of methionine to inhibit mTORC1 signaling, but dissociates in the presence of the methionine derivative S-adenosyl-L-methionine; S-adenosyl-L-homocysteine binding does not induce dissociation (PubMed:38514639). Required for mTORC1 pathway response to methionine starvation (PubMed:38514639). Exerts a protective function on developing egg chambers by inhibiting mTORC1 signaling under starvation conditions (PubMed:38514639). May also function as a N-methyltransferase that mediates the formation of anserine (beta-alanyl-N(Pi)-methyl-L-histidine) from carnosine (By similarity). It is unclear whether this protein has retained N-methyltransferase activity or if it is an evolutionary intermediate whose substrate binding ability has been co-opted to function as a nutrient sensor for mTORC1 signaling (Probable).</text>
</comment>
<comment type="catalytic activity">
    <reaction evidence="1">
        <text>carnosine + S-adenosyl-L-methionine = anserine + S-adenosyl-L-homocysteine + H(+)</text>
        <dbReference type="Rhea" id="RHEA:14205"/>
        <dbReference type="ChEBI" id="CHEBI:15378"/>
        <dbReference type="ChEBI" id="CHEBI:57485"/>
        <dbReference type="ChEBI" id="CHEBI:57856"/>
        <dbReference type="ChEBI" id="CHEBI:58445"/>
        <dbReference type="ChEBI" id="CHEBI:59789"/>
        <dbReference type="EC" id="2.1.1.22"/>
    </reaction>
</comment>
<comment type="subunit">
    <text evidence="5">Associates with the GATOR2 complex; the interaction is probably direct and is inhibited by S-adenosyl-L-methionine binding (PubMed:38514639). Associates with the GATOR1 complex; the interaction is probably indirect and mediated by the GATOR2 complex (PubMed:38514639).</text>
</comment>
<comment type="alternative products">
    <event type="alternative splicing"/>
    <event type="alternative initiation"/>
    <isoform>
        <id>Q9I7X6-2</id>
        <name evidence="10">C</name>
        <sequence type="displayed"/>
    </isoform>
    <isoform>
        <id>Q9I7X6-1</id>
        <name evidence="10">A</name>
        <sequence type="described" ref="VSP_062506"/>
    </isoform>
    <isoform>
        <id>Q9I7X6-3</id>
        <name evidence="10">B</name>
        <name evidence="10">D</name>
        <name evidence="10">E</name>
        <sequence type="described" ref="VSP_062505"/>
    </isoform>
</comment>
<comment type="disruption phenotype">
    <text evidence="5">Viable (PubMed:38514639). Egg chambers develop normally in adult females fed a full diet but show enhanced degradation and apoptosis under methionine starvation (PubMed:38514639). No effect on larvae fed a full diet however larval fat body cells fail to inhibit mTORC1signaling upon methionine starvation (PubMed:38514639).</text>
</comment>
<comment type="miscellaneous">
    <text evidence="6">The name 'unmet expectations' refers to the loss-of-function phenotype of female germline cells, which fail to sense and adapt to low-methionine (un-Met) conditions leading to their degradation.</text>
</comment>
<comment type="similarity">
    <text evidence="7">Belongs to the carnosine N-methyltransferase family.</text>
</comment>
<gene>
    <name evidence="6 10" type="primary">unmet</name>
    <name evidence="10" type="ORF">CG11596</name>
</gene>
<protein>
    <recommendedName>
        <fullName evidence="1">Carnosine N-methyltransferase unmet</fullName>
        <ecNumber evidence="1">2.1.1.22</ecNumber>
    </recommendedName>
    <alternativeName>
        <fullName evidence="6 10">Protein unmet expectations</fullName>
    </alternativeName>
</protein>
<name>CARME_DROME</name>